<dbReference type="EC" id="2.1.1.-" evidence="1"/>
<dbReference type="EMBL" id="CU928162">
    <property type="protein sequence ID" value="CAR09921.1"/>
    <property type="molecule type" value="Genomic_DNA"/>
</dbReference>
<dbReference type="RefSeq" id="WP_001145837.1">
    <property type="nucleotide sequence ID" value="NC_011745.1"/>
</dbReference>
<dbReference type="SMR" id="B7N0Q3"/>
<dbReference type="KEGG" id="ecq:ECED1_3918"/>
<dbReference type="HOGENOM" id="CLU_049382_4_1_6"/>
<dbReference type="Proteomes" id="UP000000748">
    <property type="component" value="Chromosome"/>
</dbReference>
<dbReference type="GO" id="GO:0005829">
    <property type="term" value="C:cytosol"/>
    <property type="evidence" value="ECO:0007669"/>
    <property type="project" value="TreeGrafter"/>
</dbReference>
<dbReference type="GO" id="GO:0016279">
    <property type="term" value="F:protein-lysine N-methyltransferase activity"/>
    <property type="evidence" value="ECO:0007669"/>
    <property type="project" value="TreeGrafter"/>
</dbReference>
<dbReference type="GO" id="GO:0032259">
    <property type="term" value="P:methylation"/>
    <property type="evidence" value="ECO:0007669"/>
    <property type="project" value="UniProtKB-KW"/>
</dbReference>
<dbReference type="CDD" id="cd02440">
    <property type="entry name" value="AdoMet_MTases"/>
    <property type="match status" value="1"/>
</dbReference>
<dbReference type="FunFam" id="3.40.50.150:FF:000021">
    <property type="entry name" value="Ribosomal protein L11 methyltransferase"/>
    <property type="match status" value="1"/>
</dbReference>
<dbReference type="Gene3D" id="3.40.50.150">
    <property type="entry name" value="Vaccinia Virus protein VP39"/>
    <property type="match status" value="1"/>
</dbReference>
<dbReference type="HAMAP" id="MF_00735">
    <property type="entry name" value="Methyltr_PrmA"/>
    <property type="match status" value="1"/>
</dbReference>
<dbReference type="InterPro" id="IPR050078">
    <property type="entry name" value="Ribosomal_L11_MeTrfase_PrmA"/>
</dbReference>
<dbReference type="InterPro" id="IPR004498">
    <property type="entry name" value="Ribosomal_PrmA_MeTrfase"/>
</dbReference>
<dbReference type="InterPro" id="IPR029063">
    <property type="entry name" value="SAM-dependent_MTases_sf"/>
</dbReference>
<dbReference type="NCBIfam" id="TIGR00406">
    <property type="entry name" value="prmA"/>
    <property type="match status" value="1"/>
</dbReference>
<dbReference type="PANTHER" id="PTHR43648">
    <property type="entry name" value="ELECTRON TRANSFER FLAVOPROTEIN BETA SUBUNIT LYSINE METHYLTRANSFERASE"/>
    <property type="match status" value="1"/>
</dbReference>
<dbReference type="PANTHER" id="PTHR43648:SF1">
    <property type="entry name" value="ELECTRON TRANSFER FLAVOPROTEIN BETA SUBUNIT LYSINE METHYLTRANSFERASE"/>
    <property type="match status" value="1"/>
</dbReference>
<dbReference type="Pfam" id="PF06325">
    <property type="entry name" value="PrmA"/>
    <property type="match status" value="1"/>
</dbReference>
<dbReference type="PIRSF" id="PIRSF000401">
    <property type="entry name" value="RPL11_MTase"/>
    <property type="match status" value="1"/>
</dbReference>
<dbReference type="SUPFAM" id="SSF53335">
    <property type="entry name" value="S-adenosyl-L-methionine-dependent methyltransferases"/>
    <property type="match status" value="1"/>
</dbReference>
<sequence length="293" mass="31895">MPWIQLKLNTTGANAEDLSDALMEAGAVSITFQDTHDTPVFEPLPGETRLWGDTDVIGLFDAETDMNDVVAILENHPMLGAGFAHKIEQLEDKDWEREWMDNFHPMRFGERLWICPSWRDVPDENAVNVMLDPGLAFGTGTHPTTSLCLQWLDSLDLTGKTVIDFGCGSGILAIAALKLGAAKAIGIDIDPQAIQASRDNAERNGVSDRLELYLPKDQPEEMKADVVVANILAGPLRELAPLISVLPVSGGLLGLSGILASQAESVCEAYADSFALDPVVEKEEWCRITGRKN</sequence>
<accession>B7N0Q3</accession>
<reference key="1">
    <citation type="journal article" date="2009" name="PLoS Genet.">
        <title>Organised genome dynamics in the Escherichia coli species results in highly diverse adaptive paths.</title>
        <authorList>
            <person name="Touchon M."/>
            <person name="Hoede C."/>
            <person name="Tenaillon O."/>
            <person name="Barbe V."/>
            <person name="Baeriswyl S."/>
            <person name="Bidet P."/>
            <person name="Bingen E."/>
            <person name="Bonacorsi S."/>
            <person name="Bouchier C."/>
            <person name="Bouvet O."/>
            <person name="Calteau A."/>
            <person name="Chiapello H."/>
            <person name="Clermont O."/>
            <person name="Cruveiller S."/>
            <person name="Danchin A."/>
            <person name="Diard M."/>
            <person name="Dossat C."/>
            <person name="Karoui M.E."/>
            <person name="Frapy E."/>
            <person name="Garry L."/>
            <person name="Ghigo J.M."/>
            <person name="Gilles A.M."/>
            <person name="Johnson J."/>
            <person name="Le Bouguenec C."/>
            <person name="Lescat M."/>
            <person name="Mangenot S."/>
            <person name="Martinez-Jehanne V."/>
            <person name="Matic I."/>
            <person name="Nassif X."/>
            <person name="Oztas S."/>
            <person name="Petit M.A."/>
            <person name="Pichon C."/>
            <person name="Rouy Z."/>
            <person name="Ruf C.S."/>
            <person name="Schneider D."/>
            <person name="Tourret J."/>
            <person name="Vacherie B."/>
            <person name="Vallenet D."/>
            <person name="Medigue C."/>
            <person name="Rocha E.P.C."/>
            <person name="Denamur E."/>
        </authorList>
    </citation>
    <scope>NUCLEOTIDE SEQUENCE [LARGE SCALE GENOMIC DNA]</scope>
    <source>
        <strain>ED1a</strain>
    </source>
</reference>
<organism>
    <name type="scientific">Escherichia coli O81 (strain ED1a)</name>
    <dbReference type="NCBI Taxonomy" id="585397"/>
    <lineage>
        <taxon>Bacteria</taxon>
        <taxon>Pseudomonadati</taxon>
        <taxon>Pseudomonadota</taxon>
        <taxon>Gammaproteobacteria</taxon>
        <taxon>Enterobacterales</taxon>
        <taxon>Enterobacteriaceae</taxon>
        <taxon>Escherichia</taxon>
    </lineage>
</organism>
<name>PRMA_ECO81</name>
<evidence type="ECO:0000255" key="1">
    <source>
        <dbReference type="HAMAP-Rule" id="MF_00735"/>
    </source>
</evidence>
<keyword id="KW-0963">Cytoplasm</keyword>
<keyword id="KW-0489">Methyltransferase</keyword>
<keyword id="KW-0949">S-adenosyl-L-methionine</keyword>
<keyword id="KW-0808">Transferase</keyword>
<protein>
    <recommendedName>
        <fullName evidence="1">Ribosomal protein L11 methyltransferase</fullName>
        <shortName evidence="1">L11 Mtase</shortName>
        <ecNumber evidence="1">2.1.1.-</ecNumber>
    </recommendedName>
</protein>
<proteinExistence type="inferred from homology"/>
<feature type="chain" id="PRO_1000192630" description="Ribosomal protein L11 methyltransferase">
    <location>
        <begin position="1"/>
        <end position="293"/>
    </location>
</feature>
<feature type="binding site" evidence="1">
    <location>
        <position position="145"/>
    </location>
    <ligand>
        <name>S-adenosyl-L-methionine</name>
        <dbReference type="ChEBI" id="CHEBI:59789"/>
    </ligand>
</feature>
<feature type="binding site" evidence="1">
    <location>
        <position position="166"/>
    </location>
    <ligand>
        <name>S-adenosyl-L-methionine</name>
        <dbReference type="ChEBI" id="CHEBI:59789"/>
    </ligand>
</feature>
<feature type="binding site" evidence="1">
    <location>
        <position position="188"/>
    </location>
    <ligand>
        <name>S-adenosyl-L-methionine</name>
        <dbReference type="ChEBI" id="CHEBI:59789"/>
    </ligand>
</feature>
<feature type="binding site" evidence="1">
    <location>
        <position position="230"/>
    </location>
    <ligand>
        <name>S-adenosyl-L-methionine</name>
        <dbReference type="ChEBI" id="CHEBI:59789"/>
    </ligand>
</feature>
<gene>
    <name evidence="1" type="primary">prmA</name>
    <name type="ordered locus">ECED1_3918</name>
</gene>
<comment type="function">
    <text evidence="1">Methylates ribosomal protein L11.</text>
</comment>
<comment type="catalytic activity">
    <reaction evidence="1">
        <text>L-lysyl-[protein] + 3 S-adenosyl-L-methionine = N(6),N(6),N(6)-trimethyl-L-lysyl-[protein] + 3 S-adenosyl-L-homocysteine + 3 H(+)</text>
        <dbReference type="Rhea" id="RHEA:54192"/>
        <dbReference type="Rhea" id="RHEA-COMP:9752"/>
        <dbReference type="Rhea" id="RHEA-COMP:13826"/>
        <dbReference type="ChEBI" id="CHEBI:15378"/>
        <dbReference type="ChEBI" id="CHEBI:29969"/>
        <dbReference type="ChEBI" id="CHEBI:57856"/>
        <dbReference type="ChEBI" id="CHEBI:59789"/>
        <dbReference type="ChEBI" id="CHEBI:61961"/>
    </reaction>
</comment>
<comment type="subcellular location">
    <subcellularLocation>
        <location evidence="1">Cytoplasm</location>
    </subcellularLocation>
</comment>
<comment type="similarity">
    <text evidence="1">Belongs to the methyltransferase superfamily. PrmA family.</text>
</comment>